<gene>
    <name type="primary">HXK6</name>
    <name type="synonym">HXK2</name>
    <name type="ordered locus">Os01g0742500</name>
    <name type="ordered locus">LOC_Os01g53930</name>
    <name type="ORF">P0439E07.19</name>
</gene>
<reference key="1">
    <citation type="journal article" date="2006" name="Planta">
        <title>Structure, expression, and functional analysis of the hexokinase gene family in rice (Oryza sativa L.).</title>
        <authorList>
            <person name="Cho J.-I."/>
            <person name="Ryoo N."/>
            <person name="Ko S."/>
            <person name="Lee S.-K."/>
            <person name="Lee J."/>
            <person name="Jung K.-H."/>
            <person name="Lee Y.-H."/>
            <person name="Bhoo S.H."/>
            <person name="Winderickx J."/>
            <person name="An G."/>
            <person name="Hahn T.-R."/>
            <person name="Jeon J.-S."/>
        </authorList>
    </citation>
    <scope>NUCLEOTIDE SEQUENCE [MRNA]</scope>
    <scope>FUNCTION</scope>
    <scope>TISSUE SPECIFICITY</scope>
    <scope>DEVELOPMENTAL STAGE</scope>
    <scope>INDUCTION</scope>
    <scope>NOMENCLATURE</scope>
    <source>
        <strain>cv. Jinmi</strain>
    </source>
</reference>
<reference key="2">
    <citation type="submission" date="2005-01" db="EMBL/GenBank/DDBJ databases">
        <title>The hexokinase gene family in rice.</title>
        <authorList>
            <person name="Wang Y.D."/>
            <person name="Cheng W."/>
            <person name="Wang X.S."/>
            <person name="Zhou X.J."/>
        </authorList>
    </citation>
    <scope>NUCLEOTIDE SEQUENCE [MRNA]</scope>
    <source>
        <strain>cv. Zhonghua 15</strain>
        <tissue>Flower</tissue>
    </source>
</reference>
<reference key="3">
    <citation type="journal article" date="2002" name="Nature">
        <title>The genome sequence and structure of rice chromosome 1.</title>
        <authorList>
            <person name="Sasaki T."/>
            <person name="Matsumoto T."/>
            <person name="Yamamoto K."/>
            <person name="Sakata K."/>
            <person name="Baba T."/>
            <person name="Katayose Y."/>
            <person name="Wu J."/>
            <person name="Niimura Y."/>
            <person name="Cheng Z."/>
            <person name="Nagamura Y."/>
            <person name="Antonio B.A."/>
            <person name="Kanamori H."/>
            <person name="Hosokawa S."/>
            <person name="Masukawa M."/>
            <person name="Arikawa K."/>
            <person name="Chiden Y."/>
            <person name="Hayashi M."/>
            <person name="Okamoto M."/>
            <person name="Ando T."/>
            <person name="Aoki H."/>
            <person name="Arita K."/>
            <person name="Hamada M."/>
            <person name="Harada C."/>
            <person name="Hijishita S."/>
            <person name="Honda M."/>
            <person name="Ichikawa Y."/>
            <person name="Idonuma A."/>
            <person name="Iijima M."/>
            <person name="Ikeda M."/>
            <person name="Ikeno M."/>
            <person name="Ito S."/>
            <person name="Ito T."/>
            <person name="Ito Y."/>
            <person name="Ito Y."/>
            <person name="Iwabuchi A."/>
            <person name="Kamiya K."/>
            <person name="Karasawa W."/>
            <person name="Katagiri S."/>
            <person name="Kikuta A."/>
            <person name="Kobayashi N."/>
            <person name="Kono I."/>
            <person name="Machita K."/>
            <person name="Maehara T."/>
            <person name="Mizuno H."/>
            <person name="Mizubayashi T."/>
            <person name="Mukai Y."/>
            <person name="Nagasaki H."/>
            <person name="Nakashima M."/>
            <person name="Nakama Y."/>
            <person name="Nakamichi Y."/>
            <person name="Nakamura M."/>
            <person name="Namiki N."/>
            <person name="Negishi M."/>
            <person name="Ohta I."/>
            <person name="Ono N."/>
            <person name="Saji S."/>
            <person name="Sakai K."/>
            <person name="Shibata M."/>
            <person name="Shimokawa T."/>
            <person name="Shomura A."/>
            <person name="Song J."/>
            <person name="Takazaki Y."/>
            <person name="Terasawa K."/>
            <person name="Tsuji K."/>
            <person name="Waki K."/>
            <person name="Yamagata H."/>
            <person name="Yamane H."/>
            <person name="Yoshiki S."/>
            <person name="Yoshihara R."/>
            <person name="Yukawa K."/>
            <person name="Zhong H."/>
            <person name="Iwama H."/>
            <person name="Endo T."/>
            <person name="Ito H."/>
            <person name="Hahn J.H."/>
            <person name="Kim H.-I."/>
            <person name="Eun M.-Y."/>
            <person name="Yano M."/>
            <person name="Jiang J."/>
            <person name="Gojobori T."/>
        </authorList>
    </citation>
    <scope>NUCLEOTIDE SEQUENCE [LARGE SCALE GENOMIC DNA]</scope>
    <source>
        <strain>cv. Nipponbare</strain>
    </source>
</reference>
<reference key="4">
    <citation type="journal article" date="2005" name="Nature">
        <title>The map-based sequence of the rice genome.</title>
        <authorList>
            <consortium name="International rice genome sequencing project (IRGSP)"/>
        </authorList>
    </citation>
    <scope>NUCLEOTIDE SEQUENCE [LARGE SCALE GENOMIC DNA]</scope>
    <source>
        <strain>cv. Nipponbare</strain>
    </source>
</reference>
<reference key="5">
    <citation type="journal article" date="2008" name="Nucleic Acids Res.">
        <title>The rice annotation project database (RAP-DB): 2008 update.</title>
        <authorList>
            <consortium name="The rice annotation project (RAP)"/>
        </authorList>
    </citation>
    <scope>GENOME REANNOTATION</scope>
    <source>
        <strain>cv. Nipponbare</strain>
    </source>
</reference>
<reference key="6">
    <citation type="journal article" date="2013" name="Rice">
        <title>Improvement of the Oryza sativa Nipponbare reference genome using next generation sequence and optical map data.</title>
        <authorList>
            <person name="Kawahara Y."/>
            <person name="de la Bastide M."/>
            <person name="Hamilton J.P."/>
            <person name="Kanamori H."/>
            <person name="McCombie W.R."/>
            <person name="Ouyang S."/>
            <person name="Schwartz D.C."/>
            <person name="Tanaka T."/>
            <person name="Wu J."/>
            <person name="Zhou S."/>
            <person name="Childs K.L."/>
            <person name="Davidson R.M."/>
            <person name="Lin H."/>
            <person name="Quesada-Ocampo L."/>
            <person name="Vaillancourt B."/>
            <person name="Sakai H."/>
            <person name="Lee S.S."/>
            <person name="Kim J."/>
            <person name="Numa H."/>
            <person name="Itoh T."/>
            <person name="Buell C.R."/>
            <person name="Matsumoto T."/>
        </authorList>
    </citation>
    <scope>GENOME REANNOTATION</scope>
    <source>
        <strain>cv. Nipponbare</strain>
    </source>
</reference>
<reference key="7">
    <citation type="journal article" date="2003" name="Science">
        <title>Collection, mapping, and annotation of over 28,000 cDNA clones from japonica rice.</title>
        <authorList>
            <consortium name="The rice full-length cDNA consortium"/>
        </authorList>
    </citation>
    <scope>NUCLEOTIDE SEQUENCE [LARGE SCALE MRNA]</scope>
    <source>
        <strain>cv. Nipponbare</strain>
    </source>
</reference>
<reference key="8">
    <citation type="journal article" date="2009" name="Plant Physiol.">
        <title>Role of the rice hexokinases OsHXK5 and OsHXK6 as glucose sensors.</title>
        <authorList>
            <person name="Cho J.I."/>
            <person name="Ryoo N."/>
            <person name="Eom J.S."/>
            <person name="Lee D.W."/>
            <person name="Kim H.B."/>
            <person name="Jeong S.W."/>
            <person name="Lee Y.H."/>
            <person name="Kwon Y.K."/>
            <person name="Cho M.H."/>
            <person name="Bhoo S.H."/>
            <person name="Hahn T.R."/>
            <person name="Park Y.I."/>
            <person name="Hwang I."/>
            <person name="Sheen J."/>
            <person name="Jeon J.S."/>
        </authorList>
    </citation>
    <scope>FUNCTION</scope>
    <scope>MUTAGENESIS OF GLY-112 AND SER-185</scope>
</reference>
<reference key="9">
    <citation type="submission" date="2018-04" db="PDB data bank">
        <title>Crystal structure of Oryza sativa hexokinase 6.</title>
        <authorList>
            <person name="Matsudaira K."/>
            <person name="Mochizuki S."/>
            <person name="Yoshida H."/>
            <person name="Kamitori S."/>
            <person name="Akimitsu K."/>
        </authorList>
    </citation>
    <scope>X-RAY CRYSTALLOGRAPHY (2.84 ANGSTROMS) OF 45-506 IN COMPLEX WITH D-GLUCOSE</scope>
</reference>
<reference key="10">
    <citation type="journal article" date="2019" name="Biochem. Biophys. Res. Commun.">
        <title>Crystal structures of rice hexokinase 6 with a series of substrates shed light on its enzymatic mechanism.</title>
        <authorList>
            <person name="He C."/>
            <person name="Chen J."/>
            <person name="Wang H."/>
            <person name="Wan Y."/>
            <person name="Zhou J."/>
            <person name="Dan Z."/>
            <person name="Zeng Y."/>
            <person name="Xu W."/>
            <person name="Zhu Y."/>
            <person name="Huang W."/>
            <person name="Yin L."/>
        </authorList>
    </citation>
    <scope>X-RAY CRYSTALLOGRAPHY (2.60 ANGSTROMS) OF 39-506 IN COMPLEX WITH D-GLUCOSE AND ADP</scope>
</reference>
<comment type="function">
    <text evidence="4 5">Fructose and glucose phosphorylating enzyme (PubMed:16552590). Functions as a glucose sensor for plant growth and photosynthesis (PubMed:19010999).</text>
</comment>
<comment type="catalytic activity">
    <reaction evidence="9">
        <text>a D-hexose + ATP = a D-hexose 6-phosphate + ADP + H(+)</text>
        <dbReference type="Rhea" id="RHEA:22740"/>
        <dbReference type="ChEBI" id="CHEBI:4194"/>
        <dbReference type="ChEBI" id="CHEBI:15378"/>
        <dbReference type="ChEBI" id="CHEBI:30616"/>
        <dbReference type="ChEBI" id="CHEBI:229467"/>
        <dbReference type="ChEBI" id="CHEBI:456216"/>
        <dbReference type="EC" id="2.7.1.1"/>
    </reaction>
    <physiologicalReaction direction="left-to-right" evidence="9">
        <dbReference type="Rhea" id="RHEA:22741"/>
    </physiologicalReaction>
</comment>
<comment type="catalytic activity">
    <reaction evidence="9">
        <text>D-fructose + ATP = D-fructose 6-phosphate + ADP + H(+)</text>
        <dbReference type="Rhea" id="RHEA:16125"/>
        <dbReference type="ChEBI" id="CHEBI:15378"/>
        <dbReference type="ChEBI" id="CHEBI:30616"/>
        <dbReference type="ChEBI" id="CHEBI:37721"/>
        <dbReference type="ChEBI" id="CHEBI:61527"/>
        <dbReference type="ChEBI" id="CHEBI:456216"/>
        <dbReference type="EC" id="2.7.1.1"/>
    </reaction>
    <physiologicalReaction direction="left-to-right" evidence="9">
        <dbReference type="Rhea" id="RHEA:16126"/>
    </physiologicalReaction>
</comment>
<comment type="catalytic activity">
    <reaction evidence="9">
        <text>D-glucose + ATP = D-glucose 6-phosphate + ADP + H(+)</text>
        <dbReference type="Rhea" id="RHEA:17825"/>
        <dbReference type="ChEBI" id="CHEBI:4167"/>
        <dbReference type="ChEBI" id="CHEBI:15378"/>
        <dbReference type="ChEBI" id="CHEBI:30616"/>
        <dbReference type="ChEBI" id="CHEBI:61548"/>
        <dbReference type="ChEBI" id="CHEBI:456216"/>
        <dbReference type="EC" id="2.7.1.1"/>
    </reaction>
    <physiologicalReaction direction="left-to-right" evidence="9">
        <dbReference type="Rhea" id="RHEA:17826"/>
    </physiologicalReaction>
</comment>
<comment type="pathway">
    <text evidence="9">Carbohydrate metabolism; hexose metabolism.</text>
</comment>
<comment type="pathway">
    <text evidence="9">Carbohydrate degradation; glycolysis; D-glyceraldehyde 3-phosphate and glycerone phosphate from D-glucose: step 1/4.</text>
</comment>
<comment type="subcellular location">
    <subcellularLocation>
        <location evidence="1">Plastid</location>
        <location evidence="1">Chloroplast outer membrane</location>
        <topology evidence="1">Single-pass membrane protein</topology>
    </subcellularLocation>
</comment>
<comment type="tissue specificity">
    <text evidence="4">Expressed in roots, leaves, flowers, immature seeds and endosperm.</text>
</comment>
<comment type="developmental stage">
    <text evidence="4">Expressed during flower development until 15 days after flowering.</text>
</comment>
<comment type="induction">
    <text evidence="4">By glucose or fructose treatment in leaves.</text>
</comment>
<comment type="miscellaneous">
    <text evidence="5">Plants over-expressing HXK6 exhibit hypersensitive plant growth retardation and enhanced repression of the photosynthetic gene RbcS in response to glucose treatment.</text>
</comment>
<comment type="similarity">
    <text evidence="3 8">Belongs to the hexokinase family.</text>
</comment>
<dbReference type="EC" id="2.7.1.1" evidence="9"/>
<dbReference type="EMBL" id="DQ116388">
    <property type="protein sequence ID" value="AAZ93623.1"/>
    <property type="molecule type" value="mRNA"/>
</dbReference>
<dbReference type="EMBL" id="AY884165">
    <property type="protein sequence ID" value="AAX68418.1"/>
    <property type="molecule type" value="mRNA"/>
</dbReference>
<dbReference type="EMBL" id="AP003768">
    <property type="protein sequence ID" value="BAB91930.1"/>
    <property type="molecule type" value="Genomic_DNA"/>
</dbReference>
<dbReference type="EMBL" id="AP008207">
    <property type="protein sequence ID" value="BAF06128.1"/>
    <property type="molecule type" value="Genomic_DNA"/>
</dbReference>
<dbReference type="EMBL" id="AP014957">
    <property type="protein sequence ID" value="BAS74288.1"/>
    <property type="molecule type" value="Genomic_DNA"/>
</dbReference>
<dbReference type="EMBL" id="AK065656">
    <property type="protein sequence ID" value="BAG89607.1"/>
    <property type="molecule type" value="mRNA"/>
</dbReference>
<dbReference type="RefSeq" id="XP_015618116.1">
    <property type="nucleotide sequence ID" value="XM_015762630.1"/>
</dbReference>
<dbReference type="PDB" id="5ZQT">
    <property type="method" value="X-ray"/>
    <property type="resolution" value="2.84 A"/>
    <property type="chains" value="A/B/C=45-506"/>
</dbReference>
<dbReference type="PDB" id="6JJ4">
    <property type="method" value="X-ray"/>
    <property type="resolution" value="2.60 A"/>
    <property type="chains" value="A=40-506"/>
</dbReference>
<dbReference type="PDB" id="6JJ7">
    <property type="method" value="X-ray"/>
    <property type="resolution" value="2.90 A"/>
    <property type="chains" value="A/C/E=39-503"/>
</dbReference>
<dbReference type="PDB" id="6JJ8">
    <property type="method" value="X-ray"/>
    <property type="resolution" value="2.80 A"/>
    <property type="chains" value="A/B/C=39-503"/>
</dbReference>
<dbReference type="PDB" id="6JJ9">
    <property type="method" value="X-ray"/>
    <property type="resolution" value="3.00 A"/>
    <property type="chains" value="A/C/E=39-503"/>
</dbReference>
<dbReference type="PDBsum" id="5ZQT"/>
<dbReference type="PDBsum" id="6JJ4"/>
<dbReference type="PDBsum" id="6JJ7"/>
<dbReference type="PDBsum" id="6JJ8"/>
<dbReference type="PDBsum" id="6JJ9"/>
<dbReference type="SMR" id="Q8LQ68"/>
<dbReference type="FunCoup" id="Q8LQ68">
    <property type="interactions" value="1432"/>
</dbReference>
<dbReference type="STRING" id="39947.Q8LQ68"/>
<dbReference type="PaxDb" id="39947-Q8LQ68"/>
<dbReference type="EnsemblPlants" id="Os01t0742500-01">
    <property type="protein sequence ID" value="Os01t0742500-01"/>
    <property type="gene ID" value="Os01g0742500"/>
</dbReference>
<dbReference type="Gramene" id="Os01t0742500-01">
    <property type="protein sequence ID" value="Os01t0742500-01"/>
    <property type="gene ID" value="Os01g0742500"/>
</dbReference>
<dbReference type="KEGG" id="dosa:Os01g0742500"/>
<dbReference type="eggNOG" id="KOG1369">
    <property type="taxonomic scope" value="Eukaryota"/>
</dbReference>
<dbReference type="HOGENOM" id="CLU_014393_5_1_1"/>
<dbReference type="InParanoid" id="Q8LQ68"/>
<dbReference type="OMA" id="TEYRECL"/>
<dbReference type="OrthoDB" id="419537at2759"/>
<dbReference type="BRENDA" id="2.7.1.1">
    <property type="organism ID" value="4460"/>
</dbReference>
<dbReference type="UniPathway" id="UPA00109">
    <property type="reaction ID" value="UER00180"/>
</dbReference>
<dbReference type="UniPathway" id="UPA00242"/>
<dbReference type="Proteomes" id="UP000000763">
    <property type="component" value="Chromosome 1"/>
</dbReference>
<dbReference type="Proteomes" id="UP000059680">
    <property type="component" value="Chromosome 1"/>
</dbReference>
<dbReference type="GO" id="GO:0009707">
    <property type="term" value="C:chloroplast outer membrane"/>
    <property type="evidence" value="ECO:0007669"/>
    <property type="project" value="UniProtKB-SubCell"/>
</dbReference>
<dbReference type="GO" id="GO:0005829">
    <property type="term" value="C:cytosol"/>
    <property type="evidence" value="ECO:0000318"/>
    <property type="project" value="GO_Central"/>
</dbReference>
<dbReference type="GO" id="GO:0005739">
    <property type="term" value="C:mitochondrion"/>
    <property type="evidence" value="ECO:0000314"/>
    <property type="project" value="CACAO"/>
</dbReference>
<dbReference type="GO" id="GO:0005524">
    <property type="term" value="F:ATP binding"/>
    <property type="evidence" value="ECO:0007669"/>
    <property type="project" value="UniProtKB-KW"/>
</dbReference>
<dbReference type="GO" id="GO:0005536">
    <property type="term" value="F:D-glucose binding"/>
    <property type="evidence" value="ECO:0007669"/>
    <property type="project" value="InterPro"/>
</dbReference>
<dbReference type="GO" id="GO:0008865">
    <property type="term" value="F:fructokinase activity"/>
    <property type="evidence" value="ECO:0000318"/>
    <property type="project" value="GO_Central"/>
</dbReference>
<dbReference type="GO" id="GO:0004340">
    <property type="term" value="F:glucokinase activity"/>
    <property type="evidence" value="ECO:0000315"/>
    <property type="project" value="CACAO"/>
</dbReference>
<dbReference type="GO" id="GO:0051156">
    <property type="term" value="P:glucose 6-phosphate metabolic process"/>
    <property type="evidence" value="ECO:0000318"/>
    <property type="project" value="GO_Central"/>
</dbReference>
<dbReference type="GO" id="GO:0006006">
    <property type="term" value="P:glucose metabolic process"/>
    <property type="evidence" value="ECO:0000318"/>
    <property type="project" value="GO_Central"/>
</dbReference>
<dbReference type="GO" id="GO:0006096">
    <property type="term" value="P:glycolytic process"/>
    <property type="evidence" value="ECO:0000318"/>
    <property type="project" value="GO_Central"/>
</dbReference>
<dbReference type="GO" id="GO:0001678">
    <property type="term" value="P:intracellular glucose homeostasis"/>
    <property type="evidence" value="ECO:0000318"/>
    <property type="project" value="GO_Central"/>
</dbReference>
<dbReference type="GO" id="GO:0009749">
    <property type="term" value="P:response to glucose"/>
    <property type="evidence" value="ECO:0000315"/>
    <property type="project" value="CACAO"/>
</dbReference>
<dbReference type="CDD" id="cd24020">
    <property type="entry name" value="ASKHA_NBD_HK_plant"/>
    <property type="match status" value="1"/>
</dbReference>
<dbReference type="FunFam" id="3.30.420.40:FF:000034">
    <property type="entry name" value="Phosphotransferase"/>
    <property type="match status" value="1"/>
</dbReference>
<dbReference type="FunFam" id="3.40.367.20:FF:000003">
    <property type="entry name" value="Phosphotransferase"/>
    <property type="match status" value="1"/>
</dbReference>
<dbReference type="Gene3D" id="3.30.420.40">
    <property type="match status" value="1"/>
</dbReference>
<dbReference type="Gene3D" id="3.40.367.20">
    <property type="match status" value="1"/>
</dbReference>
<dbReference type="InterPro" id="IPR043129">
    <property type="entry name" value="ATPase_NBD"/>
</dbReference>
<dbReference type="InterPro" id="IPR001312">
    <property type="entry name" value="Hexokinase"/>
</dbReference>
<dbReference type="InterPro" id="IPR019807">
    <property type="entry name" value="Hexokinase_BS"/>
</dbReference>
<dbReference type="InterPro" id="IPR022673">
    <property type="entry name" value="Hexokinase_C"/>
</dbReference>
<dbReference type="InterPro" id="IPR022672">
    <property type="entry name" value="Hexokinase_N"/>
</dbReference>
<dbReference type="PANTHER" id="PTHR19443">
    <property type="entry name" value="HEXOKINASE"/>
    <property type="match status" value="1"/>
</dbReference>
<dbReference type="PANTHER" id="PTHR19443:SF15">
    <property type="entry name" value="HEXOKINASE-6"/>
    <property type="match status" value="1"/>
</dbReference>
<dbReference type="Pfam" id="PF00349">
    <property type="entry name" value="Hexokinase_1"/>
    <property type="match status" value="1"/>
</dbReference>
<dbReference type="Pfam" id="PF03727">
    <property type="entry name" value="Hexokinase_2"/>
    <property type="match status" value="1"/>
</dbReference>
<dbReference type="PRINTS" id="PR00475">
    <property type="entry name" value="HEXOKINASE"/>
</dbReference>
<dbReference type="SUPFAM" id="SSF53067">
    <property type="entry name" value="Actin-like ATPase domain"/>
    <property type="match status" value="2"/>
</dbReference>
<dbReference type="PROSITE" id="PS00378">
    <property type="entry name" value="HEXOKINASE_1"/>
    <property type="match status" value="1"/>
</dbReference>
<dbReference type="PROSITE" id="PS51748">
    <property type="entry name" value="HEXOKINASE_2"/>
    <property type="match status" value="1"/>
</dbReference>
<organism>
    <name type="scientific">Oryza sativa subsp. japonica</name>
    <name type="common">Rice</name>
    <dbReference type="NCBI Taxonomy" id="39947"/>
    <lineage>
        <taxon>Eukaryota</taxon>
        <taxon>Viridiplantae</taxon>
        <taxon>Streptophyta</taxon>
        <taxon>Embryophyta</taxon>
        <taxon>Tracheophyta</taxon>
        <taxon>Spermatophyta</taxon>
        <taxon>Magnoliopsida</taxon>
        <taxon>Liliopsida</taxon>
        <taxon>Poales</taxon>
        <taxon>Poaceae</taxon>
        <taxon>BOP clade</taxon>
        <taxon>Oryzoideae</taxon>
        <taxon>Oryzeae</taxon>
        <taxon>Oryzinae</taxon>
        <taxon>Oryza</taxon>
        <taxon>Oryza sativa</taxon>
    </lineage>
</organism>
<evidence type="ECO:0000250" key="1"/>
<evidence type="ECO:0000255" key="2"/>
<evidence type="ECO:0000255" key="3">
    <source>
        <dbReference type="PROSITE-ProRule" id="PRU01084"/>
    </source>
</evidence>
<evidence type="ECO:0000269" key="4">
    <source>
    </source>
</evidence>
<evidence type="ECO:0000269" key="5">
    <source>
    </source>
</evidence>
<evidence type="ECO:0000269" key="6">
    <source>
    </source>
</evidence>
<evidence type="ECO:0000269" key="7">
    <source ref="9"/>
</evidence>
<evidence type="ECO:0000305" key="8"/>
<evidence type="ECO:0000305" key="9">
    <source>
    </source>
</evidence>
<evidence type="ECO:0007744" key="10">
    <source>
        <dbReference type="PDB" id="5ZQT"/>
    </source>
</evidence>
<evidence type="ECO:0007744" key="11">
    <source>
        <dbReference type="PDB" id="6JJ7"/>
    </source>
</evidence>
<evidence type="ECO:0007744" key="12">
    <source>
        <dbReference type="PDB" id="6JJ8"/>
    </source>
</evidence>
<evidence type="ECO:0007744" key="13">
    <source>
        <dbReference type="PDB" id="6JJ9"/>
    </source>
</evidence>
<evidence type="ECO:0007829" key="14">
    <source>
        <dbReference type="PDB" id="5ZQT"/>
    </source>
</evidence>
<evidence type="ECO:0007829" key="15">
    <source>
        <dbReference type="PDB" id="6JJ4"/>
    </source>
</evidence>
<protein>
    <recommendedName>
        <fullName>Hexokinase-6</fullName>
        <ecNumber evidence="9">2.7.1.1</ecNumber>
    </recommendedName>
    <alternativeName>
        <fullName>Hexokinase-2</fullName>
    </alternativeName>
</protein>
<keyword id="KW-0002">3D-structure</keyword>
<keyword id="KW-0067">ATP-binding</keyword>
<keyword id="KW-0150">Chloroplast</keyword>
<keyword id="KW-0324">Glycolysis</keyword>
<keyword id="KW-0418">Kinase</keyword>
<keyword id="KW-0472">Membrane</keyword>
<keyword id="KW-0547">Nucleotide-binding</keyword>
<keyword id="KW-0934">Plastid</keyword>
<keyword id="KW-1002">Plastid outer membrane</keyword>
<keyword id="KW-1185">Reference proteome</keyword>
<keyword id="KW-0808">Transferase</keyword>
<keyword id="KW-0812">Transmembrane</keyword>
<keyword id="KW-1133">Transmembrane helix</keyword>
<feature type="chain" id="PRO_0000247569" description="Hexokinase-6">
    <location>
        <begin position="1"/>
        <end position="506"/>
    </location>
</feature>
<feature type="transmembrane region" description="Helical" evidence="2">
    <location>
        <begin position="6"/>
        <end position="26"/>
    </location>
</feature>
<feature type="domain" description="Hexokinase" evidence="3">
    <location>
        <begin position="43"/>
        <end position="497"/>
    </location>
</feature>
<feature type="region of interest" description="Hexokinase small subdomain" evidence="3">
    <location>
        <begin position="98"/>
        <end position="236"/>
    </location>
</feature>
<feature type="region of interest" description="Hexokinase large subdomain" evidence="3">
    <location>
        <begin position="237"/>
        <end position="486"/>
    </location>
</feature>
<feature type="binding site" evidence="6 12 13">
    <location>
        <position position="112"/>
    </location>
    <ligand>
        <name>ADP</name>
        <dbReference type="ChEBI" id="CHEBI:456216"/>
    </ligand>
</feature>
<feature type="binding site" evidence="6 12 13">
    <location>
        <position position="113"/>
    </location>
    <ligand>
        <name>ADP</name>
        <dbReference type="ChEBI" id="CHEBI:456216"/>
    </ligand>
</feature>
<feature type="binding site" evidence="6 12">
    <location>
        <position position="114"/>
    </location>
    <ligand>
        <name>ADP</name>
        <dbReference type="ChEBI" id="CHEBI:456216"/>
    </ligand>
</feature>
<feature type="binding site" evidence="6 7 10 11">
    <location>
        <position position="202"/>
    </location>
    <ligand>
        <name>D-glucose</name>
        <dbReference type="ChEBI" id="CHEBI:4167"/>
    </ligand>
</feature>
<feature type="binding site" evidence="6 7 10 11">
    <location>
        <position position="203"/>
    </location>
    <ligand>
        <name>D-glucose</name>
        <dbReference type="ChEBI" id="CHEBI:4167"/>
    </ligand>
</feature>
<feature type="binding site" evidence="6 7 10 11">
    <location>
        <position position="237"/>
    </location>
    <ligand>
        <name>D-glucose</name>
        <dbReference type="ChEBI" id="CHEBI:4167"/>
    </ligand>
</feature>
<feature type="binding site" evidence="6 7 10 11">
    <location>
        <position position="238"/>
    </location>
    <ligand>
        <name>D-glucose</name>
        <dbReference type="ChEBI" id="CHEBI:4167"/>
    </ligand>
</feature>
<feature type="binding site" evidence="6 12 13">
    <location>
        <position position="261"/>
    </location>
    <ligand>
        <name>ADP</name>
        <dbReference type="ChEBI" id="CHEBI:456216"/>
    </ligand>
</feature>
<feature type="binding site" evidence="6 7 10 11">
    <location>
        <position position="264"/>
    </location>
    <ligand>
        <name>D-glucose</name>
        <dbReference type="ChEBI" id="CHEBI:4167"/>
    </ligand>
</feature>
<feature type="binding site" evidence="6 7 10 11">
    <location>
        <position position="292"/>
    </location>
    <ligand>
        <name>D-glucose</name>
        <dbReference type="ChEBI" id="CHEBI:4167"/>
    </ligand>
</feature>
<feature type="binding site" evidence="6 7 10 11">
    <location>
        <position position="323"/>
    </location>
    <ligand>
        <name>D-glucose</name>
        <dbReference type="ChEBI" id="CHEBI:4167"/>
    </ligand>
</feature>
<feature type="binding site" evidence="6 12 13">
    <location>
        <position position="451"/>
    </location>
    <ligand>
        <name>ADP</name>
        <dbReference type="ChEBI" id="CHEBI:456216"/>
    </ligand>
</feature>
<feature type="mutagenesis site" description="Abolishes glucose phosphorylation activity." evidence="5">
    <original>G</original>
    <variation>D</variation>
    <location>
        <position position="112"/>
    </location>
</feature>
<feature type="mutagenesis site" description="Abolishes glucose phosphorylation activity." evidence="5">
    <original>S</original>
    <variation>A</variation>
    <location>
        <position position="185"/>
    </location>
</feature>
<feature type="helix" evidence="15">
    <location>
        <begin position="49"/>
        <end position="55"/>
    </location>
</feature>
<feature type="helix" evidence="15">
    <location>
        <begin position="60"/>
        <end position="77"/>
    </location>
</feature>
<feature type="strand" evidence="15">
    <location>
        <begin position="102"/>
        <end position="110"/>
    </location>
</feature>
<feature type="strand" evidence="15">
    <location>
        <begin position="112"/>
        <end position="123"/>
    </location>
</feature>
<feature type="helix" evidence="15">
    <location>
        <begin position="124"/>
        <end position="127"/>
    </location>
</feature>
<feature type="strand" evidence="15">
    <location>
        <begin position="129"/>
        <end position="138"/>
    </location>
</feature>
<feature type="turn" evidence="15">
    <location>
        <begin position="141"/>
        <end position="144"/>
    </location>
</feature>
<feature type="strand" evidence="15">
    <location>
        <begin position="145"/>
        <end position="147"/>
    </location>
</feature>
<feature type="helix" evidence="15">
    <location>
        <begin position="148"/>
        <end position="163"/>
    </location>
</feature>
<feature type="strand" evidence="15">
    <location>
        <begin position="172"/>
        <end position="175"/>
    </location>
</feature>
<feature type="strand" evidence="15">
    <location>
        <begin position="178"/>
        <end position="184"/>
    </location>
</feature>
<feature type="strand" evidence="15">
    <location>
        <begin position="188"/>
        <end position="192"/>
    </location>
</feature>
<feature type="strand" evidence="15">
    <location>
        <begin position="195"/>
        <end position="198"/>
    </location>
</feature>
<feature type="helix" evidence="14">
    <location>
        <begin position="208"/>
        <end position="210"/>
    </location>
</feature>
<feature type="strand" evidence="15">
    <location>
        <begin position="211"/>
        <end position="214"/>
    </location>
</feature>
<feature type="helix" evidence="15">
    <location>
        <begin position="215"/>
        <end position="224"/>
    </location>
</feature>
<feature type="turn" evidence="15">
    <location>
        <begin position="225"/>
        <end position="227"/>
    </location>
</feature>
<feature type="strand" evidence="15">
    <location>
        <begin position="230"/>
        <end position="236"/>
    </location>
</feature>
<feature type="helix" evidence="15">
    <location>
        <begin position="238"/>
        <end position="249"/>
    </location>
</feature>
<feature type="strand" evidence="15">
    <location>
        <begin position="253"/>
        <end position="271"/>
    </location>
</feature>
<feature type="turn" evidence="15">
    <location>
        <begin position="275"/>
        <end position="277"/>
    </location>
</feature>
<feature type="strand" evidence="15">
    <location>
        <begin position="279"/>
        <end position="281"/>
    </location>
</feature>
<feature type="strand" evidence="15">
    <location>
        <begin position="285"/>
        <end position="290"/>
    </location>
</feature>
<feature type="helix" evidence="15">
    <location>
        <begin position="293"/>
        <end position="295"/>
    </location>
</feature>
<feature type="helix" evidence="15">
    <location>
        <begin position="305"/>
        <end position="312"/>
    </location>
</feature>
<feature type="strand" evidence="15">
    <location>
        <begin position="314"/>
        <end position="320"/>
    </location>
</feature>
<feature type="helix" evidence="15">
    <location>
        <begin position="323"/>
        <end position="326"/>
    </location>
</feature>
<feature type="helix" evidence="15">
    <location>
        <begin position="328"/>
        <end position="344"/>
    </location>
</feature>
<feature type="strand" evidence="14">
    <location>
        <begin position="350"/>
        <end position="352"/>
    </location>
</feature>
<feature type="helix" evidence="15">
    <location>
        <begin position="356"/>
        <end position="358"/>
    </location>
</feature>
<feature type="helix" evidence="15">
    <location>
        <begin position="365"/>
        <end position="372"/>
    </location>
</feature>
<feature type="strand" evidence="15">
    <location>
        <begin position="376"/>
        <end position="378"/>
    </location>
</feature>
<feature type="helix" evidence="15">
    <location>
        <begin position="380"/>
        <end position="389"/>
    </location>
</feature>
<feature type="helix" evidence="15">
    <location>
        <begin position="397"/>
        <end position="428"/>
    </location>
</feature>
<feature type="strand" evidence="15">
    <location>
        <begin position="436"/>
        <end position="439"/>
    </location>
</feature>
<feature type="strand" evidence="15">
    <location>
        <begin position="444"/>
        <end position="450"/>
    </location>
</feature>
<feature type="helix" evidence="15">
    <location>
        <begin position="451"/>
        <end position="455"/>
    </location>
</feature>
<feature type="helix" evidence="15">
    <location>
        <begin position="457"/>
        <end position="470"/>
    </location>
</feature>
<feature type="helix" evidence="15">
    <location>
        <begin position="473"/>
        <end position="476"/>
    </location>
</feature>
<feature type="strand" evidence="15">
    <location>
        <begin position="479"/>
        <end position="483"/>
    </location>
</feature>
<feature type="strand" evidence="15">
    <location>
        <begin position="487"/>
        <end position="489"/>
    </location>
</feature>
<feature type="helix" evidence="15">
    <location>
        <begin position="493"/>
        <end position="496"/>
    </location>
</feature>
<sequence length="506" mass="55121">MGKGTVVGTAVVVCAAAAAAVGVAVVVSRRRRSKREAEEERRRRAAAVIEEVEQRFSTPTALLRGIADAMVEEMERGLRADPHAPLKMLISYVDNLPTGDEHGLFYALDLGGTNFRVIRVQLGGREKRVVSQQYEEVAIPPHLMVGTSMELFDFIAAELESFVKTEGEDFHLPEGRQRELGFTFSFPVHQTSISSGTLIKWTKGFSINGTVGEDVVAELSRAMERQGLDMKVTALVNDTVGTLAGGRYVDNDVAAAVILGTGTNAAYVEHANAIPKWTGLLPRSGNMVINMEWGNFKSERLPRSDYDNALDFESLNPGEQIYEKMISGMYLGEIVRRILLKLAHDASLFGDVVPTKLEQRFILRTPDMSAMHHDTSHDLKHLGAKLKDILGVADTSLEARYITLHVCDLVAERGARLAAAGIYGILKKLGRDRVPSDGSQKQRTVIALDGGLYEHYKKFRTCLEATLADLLGEEAASSVVVKLANDGSGIGAALLAASHSQYASVE</sequence>
<name>HXK6_ORYSJ</name>
<proteinExistence type="evidence at protein level"/>
<accession>Q8LQ68</accession>
<accession>Q0JJF0</accession>